<sequence>MLKRVFLSLLVLIGLLLLTVLGLDRWMSWKTAPYIYDELQDLPYRQVGVVLGTAKYYRTGVINQYYRYRIQGAINAYNSGKVNYLLLSGDNALQSYNEPMTMRKDLIAAGVDPSDIVLDYAGFRTLDSIVRTRKVFDTNDFIIITQRFHCERALFIALHMGIQAQCYAVPSPKDMLSVRIREFAARFGALADLYIFKREPRFLGPLVPIPAMHQVPEDAQGYPAVTPEQLLELQKKQGK</sequence>
<keyword id="KW-0997">Cell inner membrane</keyword>
<keyword id="KW-1003">Cell membrane</keyword>
<keyword id="KW-0472">Membrane</keyword>
<keyword id="KW-1185">Reference proteome</keyword>
<keyword id="KW-0812">Transmembrane</keyword>
<keyword id="KW-1133">Transmembrane helix</keyword>
<dbReference type="EMBL" id="AE005174">
    <property type="protein sequence ID" value="AAG57282.1"/>
    <property type="molecule type" value="Genomic_DNA"/>
</dbReference>
<dbReference type="EMBL" id="BA000007">
    <property type="protein sequence ID" value="BAB36459.1"/>
    <property type="molecule type" value="Genomic_DNA"/>
</dbReference>
<dbReference type="PIR" id="D91008">
    <property type="entry name" value="D91008"/>
</dbReference>
<dbReference type="PIR" id="F85852">
    <property type="entry name" value="F85852"/>
</dbReference>
<dbReference type="RefSeq" id="NP_311063.1">
    <property type="nucleotide sequence ID" value="NC_002695.1"/>
</dbReference>
<dbReference type="RefSeq" id="WP_000920064.1">
    <property type="nucleotide sequence ID" value="NZ_VOAI01000001.1"/>
</dbReference>
<dbReference type="STRING" id="155864.Z3399"/>
<dbReference type="GeneID" id="75206397"/>
<dbReference type="GeneID" id="916740"/>
<dbReference type="KEGG" id="ece:Z3399"/>
<dbReference type="KEGG" id="ecs:ECs_3036"/>
<dbReference type="PATRIC" id="fig|386585.9.peg.3161"/>
<dbReference type="eggNOG" id="COG2949">
    <property type="taxonomic scope" value="Bacteria"/>
</dbReference>
<dbReference type="HOGENOM" id="CLU_051474_0_2_6"/>
<dbReference type="OMA" id="DATWYYG"/>
<dbReference type="Proteomes" id="UP000000558">
    <property type="component" value="Chromosome"/>
</dbReference>
<dbReference type="Proteomes" id="UP000002519">
    <property type="component" value="Chromosome"/>
</dbReference>
<dbReference type="GO" id="GO:0005886">
    <property type="term" value="C:plasma membrane"/>
    <property type="evidence" value="ECO:0007669"/>
    <property type="project" value="UniProtKB-SubCell"/>
</dbReference>
<dbReference type="CDD" id="cd06259">
    <property type="entry name" value="YdcF-like"/>
    <property type="match status" value="1"/>
</dbReference>
<dbReference type="InterPro" id="IPR051599">
    <property type="entry name" value="Cell_Envelope_Assoc"/>
</dbReference>
<dbReference type="InterPro" id="IPR003848">
    <property type="entry name" value="DUF218"/>
</dbReference>
<dbReference type="InterPro" id="IPR023604">
    <property type="entry name" value="Uncharacterised_SanA"/>
</dbReference>
<dbReference type="NCBIfam" id="NF008092">
    <property type="entry name" value="PRK10834.1"/>
    <property type="match status" value="1"/>
</dbReference>
<dbReference type="PANTHER" id="PTHR30336">
    <property type="entry name" value="INNER MEMBRANE PROTEIN, PROBABLE PERMEASE"/>
    <property type="match status" value="1"/>
</dbReference>
<dbReference type="PANTHER" id="PTHR30336:SF0">
    <property type="entry name" value="PROTEIN SANA"/>
    <property type="match status" value="1"/>
</dbReference>
<dbReference type="Pfam" id="PF02698">
    <property type="entry name" value="DUF218"/>
    <property type="match status" value="1"/>
</dbReference>
<dbReference type="PIRSF" id="PIRSF005011">
    <property type="entry name" value="SanA"/>
    <property type="match status" value="1"/>
</dbReference>
<evidence type="ECO:0000250" key="1"/>
<evidence type="ECO:0000255" key="2"/>
<name>SANA_ECO57</name>
<reference key="1">
    <citation type="journal article" date="2001" name="Nature">
        <title>Genome sequence of enterohaemorrhagic Escherichia coli O157:H7.</title>
        <authorList>
            <person name="Perna N.T."/>
            <person name="Plunkett G. III"/>
            <person name="Burland V."/>
            <person name="Mau B."/>
            <person name="Glasner J.D."/>
            <person name="Rose D.J."/>
            <person name="Mayhew G.F."/>
            <person name="Evans P.S."/>
            <person name="Gregor J."/>
            <person name="Kirkpatrick H.A."/>
            <person name="Posfai G."/>
            <person name="Hackett J."/>
            <person name="Klink S."/>
            <person name="Boutin A."/>
            <person name="Shao Y."/>
            <person name="Miller L."/>
            <person name="Grotbeck E.J."/>
            <person name="Davis N.W."/>
            <person name="Lim A."/>
            <person name="Dimalanta E.T."/>
            <person name="Potamousis K."/>
            <person name="Apodaca J."/>
            <person name="Anantharaman T.S."/>
            <person name="Lin J."/>
            <person name="Yen G."/>
            <person name="Schwartz D.C."/>
            <person name="Welch R.A."/>
            <person name="Blattner F.R."/>
        </authorList>
    </citation>
    <scope>NUCLEOTIDE SEQUENCE [LARGE SCALE GENOMIC DNA]</scope>
    <source>
        <strain>O157:H7 / EDL933 / ATCC 700927 / EHEC</strain>
    </source>
</reference>
<reference key="2">
    <citation type="journal article" date="2001" name="DNA Res.">
        <title>Complete genome sequence of enterohemorrhagic Escherichia coli O157:H7 and genomic comparison with a laboratory strain K-12.</title>
        <authorList>
            <person name="Hayashi T."/>
            <person name="Makino K."/>
            <person name="Ohnishi M."/>
            <person name="Kurokawa K."/>
            <person name="Ishii K."/>
            <person name="Yokoyama K."/>
            <person name="Han C.-G."/>
            <person name="Ohtsubo E."/>
            <person name="Nakayama K."/>
            <person name="Murata T."/>
            <person name="Tanaka M."/>
            <person name="Tobe T."/>
            <person name="Iida T."/>
            <person name="Takami H."/>
            <person name="Honda T."/>
            <person name="Sasakawa C."/>
            <person name="Ogasawara N."/>
            <person name="Yasunaga T."/>
            <person name="Kuhara S."/>
            <person name="Shiba T."/>
            <person name="Hattori M."/>
            <person name="Shinagawa H."/>
        </authorList>
    </citation>
    <scope>NUCLEOTIDE SEQUENCE [LARGE SCALE GENOMIC DNA]</scope>
    <source>
        <strain>O157:H7 / Sakai / RIMD 0509952 / EHEC</strain>
    </source>
</reference>
<comment type="function">
    <text evidence="1">Participates in the barrier function of the cell envelope.</text>
</comment>
<comment type="subcellular location">
    <subcellularLocation>
        <location evidence="1">Cell inner membrane</location>
        <topology evidence="1">Single-pass membrane protein</topology>
    </subcellularLocation>
</comment>
<organism>
    <name type="scientific">Escherichia coli O157:H7</name>
    <dbReference type="NCBI Taxonomy" id="83334"/>
    <lineage>
        <taxon>Bacteria</taxon>
        <taxon>Pseudomonadati</taxon>
        <taxon>Pseudomonadota</taxon>
        <taxon>Gammaproteobacteria</taxon>
        <taxon>Enterobacterales</taxon>
        <taxon>Enterobacteriaceae</taxon>
        <taxon>Escherichia</taxon>
    </lineage>
</organism>
<proteinExistence type="inferred from homology"/>
<feature type="chain" id="PRO_0000097578" description="Protein SanA">
    <location>
        <begin position="1"/>
        <end position="239"/>
    </location>
</feature>
<feature type="topological domain" description="Cytoplasmic" evidence="2">
    <location>
        <begin position="1"/>
        <end position="6"/>
    </location>
</feature>
<feature type="transmembrane region" description="Helical" evidence="2">
    <location>
        <begin position="7"/>
        <end position="23"/>
    </location>
</feature>
<feature type="topological domain" description="Periplasmic" evidence="2">
    <location>
        <begin position="24"/>
        <end position="239"/>
    </location>
</feature>
<gene>
    <name type="primary">sanA</name>
    <name type="ordered locus">Z3399</name>
    <name type="ordered locus">ECs3036</name>
</gene>
<protein>
    <recommendedName>
        <fullName>Protein SanA</fullName>
    </recommendedName>
</protein>
<accession>P0AFY4</accession>
<accession>P33017</accession>
<accession>P76438</accession>